<keyword id="KW-0539">Nucleus</keyword>
<keyword id="KW-1185">Reference proteome</keyword>
<comment type="subcellular location">
    <subcellularLocation>
        <location evidence="2">Nucleus</location>
        <location evidence="2">Nucleolus</location>
    </subcellularLocation>
</comment>
<comment type="similarity">
    <text evidence="3">Belongs to the UPF0653 family.</text>
</comment>
<accession>Q9US15</accession>
<dbReference type="EMBL" id="CU329670">
    <property type="protein sequence ID" value="CAB63789.1"/>
    <property type="molecule type" value="Genomic_DNA"/>
</dbReference>
<dbReference type="PIR" id="T50222">
    <property type="entry name" value="T50222"/>
</dbReference>
<dbReference type="RefSeq" id="NP_593591.1">
    <property type="nucleotide sequence ID" value="NM_001019022.2"/>
</dbReference>
<dbReference type="SMR" id="Q9US15"/>
<dbReference type="BioGRID" id="278966">
    <property type="interactions" value="2"/>
</dbReference>
<dbReference type="STRING" id="284812.Q9US15"/>
<dbReference type="iPTMnet" id="Q9US15"/>
<dbReference type="PaxDb" id="4896-SPAC607.02c.1"/>
<dbReference type="EnsemblFungi" id="SPAC607.02c.1">
    <property type="protein sequence ID" value="SPAC607.02c.1:pep"/>
    <property type="gene ID" value="SPAC607.02c"/>
</dbReference>
<dbReference type="KEGG" id="spo:2542508"/>
<dbReference type="PomBase" id="SPAC607.02c"/>
<dbReference type="VEuPathDB" id="FungiDB:SPAC607.02c"/>
<dbReference type="eggNOG" id="ENOG502S9IJ">
    <property type="taxonomic scope" value="Eukaryota"/>
</dbReference>
<dbReference type="HOGENOM" id="CLU_1195469_0_0_1"/>
<dbReference type="InParanoid" id="Q9US15"/>
<dbReference type="OMA" id="KYRELMH"/>
<dbReference type="PhylomeDB" id="Q9US15"/>
<dbReference type="PRO" id="PR:Q9US15"/>
<dbReference type="Proteomes" id="UP000002485">
    <property type="component" value="Chromosome I"/>
</dbReference>
<dbReference type="GO" id="GO:0005730">
    <property type="term" value="C:nucleolus"/>
    <property type="evidence" value="ECO:0007005"/>
    <property type="project" value="PomBase"/>
</dbReference>
<dbReference type="GO" id="GO:0005634">
    <property type="term" value="C:nucleus"/>
    <property type="evidence" value="ECO:0007005"/>
    <property type="project" value="PomBase"/>
</dbReference>
<dbReference type="InterPro" id="IPR038871">
    <property type="entry name" value="C607.02c-like"/>
</dbReference>
<dbReference type="PANTHER" id="PTHR40644">
    <property type="entry name" value="UPF0653 PROTEIN C607.02C"/>
    <property type="match status" value="1"/>
</dbReference>
<dbReference type="PANTHER" id="PTHR40644:SF1">
    <property type="entry name" value="UPF0653 PROTEIN C607.02C"/>
    <property type="match status" value="1"/>
</dbReference>
<name>YK62_SCHPO</name>
<protein>
    <recommendedName>
        <fullName>UPF0653 protein C607.02c</fullName>
    </recommendedName>
</protein>
<reference key="1">
    <citation type="journal article" date="2002" name="Nature">
        <title>The genome sequence of Schizosaccharomyces pombe.</title>
        <authorList>
            <person name="Wood V."/>
            <person name="Gwilliam R."/>
            <person name="Rajandream M.A."/>
            <person name="Lyne M.H."/>
            <person name="Lyne R."/>
            <person name="Stewart A."/>
            <person name="Sgouros J.G."/>
            <person name="Peat N."/>
            <person name="Hayles J."/>
            <person name="Baker S.G."/>
            <person name="Basham D."/>
            <person name="Bowman S."/>
            <person name="Brooks K."/>
            <person name="Brown D."/>
            <person name="Brown S."/>
            <person name="Chillingworth T."/>
            <person name="Churcher C.M."/>
            <person name="Collins M."/>
            <person name="Connor R."/>
            <person name="Cronin A."/>
            <person name="Davis P."/>
            <person name="Feltwell T."/>
            <person name="Fraser A."/>
            <person name="Gentles S."/>
            <person name="Goble A."/>
            <person name="Hamlin N."/>
            <person name="Harris D.E."/>
            <person name="Hidalgo J."/>
            <person name="Hodgson G."/>
            <person name="Holroyd S."/>
            <person name="Hornsby T."/>
            <person name="Howarth S."/>
            <person name="Huckle E.J."/>
            <person name="Hunt S."/>
            <person name="Jagels K."/>
            <person name="James K.D."/>
            <person name="Jones L."/>
            <person name="Jones M."/>
            <person name="Leather S."/>
            <person name="McDonald S."/>
            <person name="McLean J."/>
            <person name="Mooney P."/>
            <person name="Moule S."/>
            <person name="Mungall K.L."/>
            <person name="Murphy L.D."/>
            <person name="Niblett D."/>
            <person name="Odell C."/>
            <person name="Oliver K."/>
            <person name="O'Neil S."/>
            <person name="Pearson D."/>
            <person name="Quail M.A."/>
            <person name="Rabbinowitsch E."/>
            <person name="Rutherford K.M."/>
            <person name="Rutter S."/>
            <person name="Saunders D."/>
            <person name="Seeger K."/>
            <person name="Sharp S."/>
            <person name="Skelton J."/>
            <person name="Simmonds M.N."/>
            <person name="Squares R."/>
            <person name="Squares S."/>
            <person name="Stevens K."/>
            <person name="Taylor K."/>
            <person name="Taylor R.G."/>
            <person name="Tivey A."/>
            <person name="Walsh S.V."/>
            <person name="Warren T."/>
            <person name="Whitehead S."/>
            <person name="Woodward J.R."/>
            <person name="Volckaert G."/>
            <person name="Aert R."/>
            <person name="Robben J."/>
            <person name="Grymonprez B."/>
            <person name="Weltjens I."/>
            <person name="Vanstreels E."/>
            <person name="Rieger M."/>
            <person name="Schaefer M."/>
            <person name="Mueller-Auer S."/>
            <person name="Gabel C."/>
            <person name="Fuchs M."/>
            <person name="Duesterhoeft A."/>
            <person name="Fritzc C."/>
            <person name="Holzer E."/>
            <person name="Moestl D."/>
            <person name="Hilbert H."/>
            <person name="Borzym K."/>
            <person name="Langer I."/>
            <person name="Beck A."/>
            <person name="Lehrach H."/>
            <person name="Reinhardt R."/>
            <person name="Pohl T.M."/>
            <person name="Eger P."/>
            <person name="Zimmermann W."/>
            <person name="Wedler H."/>
            <person name="Wambutt R."/>
            <person name="Purnelle B."/>
            <person name="Goffeau A."/>
            <person name="Cadieu E."/>
            <person name="Dreano S."/>
            <person name="Gloux S."/>
            <person name="Lelaure V."/>
            <person name="Mottier S."/>
            <person name="Galibert F."/>
            <person name="Aves S.J."/>
            <person name="Xiang Z."/>
            <person name="Hunt C."/>
            <person name="Moore K."/>
            <person name="Hurst S.M."/>
            <person name="Lucas M."/>
            <person name="Rochet M."/>
            <person name="Gaillardin C."/>
            <person name="Tallada V.A."/>
            <person name="Garzon A."/>
            <person name="Thode G."/>
            <person name="Daga R.R."/>
            <person name="Cruzado L."/>
            <person name="Jimenez J."/>
            <person name="Sanchez M."/>
            <person name="del Rey F."/>
            <person name="Benito J."/>
            <person name="Dominguez A."/>
            <person name="Revuelta J.L."/>
            <person name="Moreno S."/>
            <person name="Armstrong J."/>
            <person name="Forsburg S.L."/>
            <person name="Cerutti L."/>
            <person name="Lowe T."/>
            <person name="McCombie W.R."/>
            <person name="Paulsen I."/>
            <person name="Potashkin J."/>
            <person name="Shpakovski G.V."/>
            <person name="Ussery D."/>
            <person name="Barrell B.G."/>
            <person name="Nurse P."/>
        </authorList>
    </citation>
    <scope>NUCLEOTIDE SEQUENCE [LARGE SCALE GENOMIC DNA]</scope>
    <source>
        <strain>972 / ATCC 24843</strain>
    </source>
</reference>
<reference key="2">
    <citation type="journal article" date="2006" name="Nat. Biotechnol.">
        <title>ORFeome cloning and global analysis of protein localization in the fission yeast Schizosaccharomyces pombe.</title>
        <authorList>
            <person name="Matsuyama A."/>
            <person name="Arai R."/>
            <person name="Yashiroda Y."/>
            <person name="Shirai A."/>
            <person name="Kamata A."/>
            <person name="Sekido S."/>
            <person name="Kobayashi Y."/>
            <person name="Hashimoto A."/>
            <person name="Hamamoto M."/>
            <person name="Hiraoka Y."/>
            <person name="Horinouchi S."/>
            <person name="Yoshida M."/>
        </authorList>
    </citation>
    <scope>SUBCELLULAR LOCATION [LARGE SCALE ANALYSIS]</scope>
</reference>
<evidence type="ECO:0000256" key="1">
    <source>
        <dbReference type="SAM" id="MobiDB-lite"/>
    </source>
</evidence>
<evidence type="ECO:0000269" key="2">
    <source>
    </source>
</evidence>
<evidence type="ECO:0000305" key="3"/>
<feature type="chain" id="PRO_0000350765" description="UPF0653 protein C607.02c">
    <location>
        <begin position="1"/>
        <end position="231"/>
    </location>
</feature>
<feature type="region of interest" description="Disordered" evidence="1">
    <location>
        <begin position="1"/>
        <end position="33"/>
    </location>
</feature>
<feature type="region of interest" description="Disordered" evidence="1">
    <location>
        <begin position="47"/>
        <end position="68"/>
    </location>
</feature>
<feature type="region of interest" description="Disordered" evidence="1">
    <location>
        <begin position="93"/>
        <end position="132"/>
    </location>
</feature>
<feature type="region of interest" description="Disordered" evidence="1">
    <location>
        <begin position="147"/>
        <end position="178"/>
    </location>
</feature>
<feature type="compositionally biased region" description="Basic and acidic residues" evidence="1">
    <location>
        <begin position="9"/>
        <end position="27"/>
    </location>
</feature>
<feature type="compositionally biased region" description="Basic residues" evidence="1">
    <location>
        <begin position="53"/>
        <end position="67"/>
    </location>
</feature>
<feature type="compositionally biased region" description="Basic residues" evidence="1">
    <location>
        <begin position="109"/>
        <end position="119"/>
    </location>
</feature>
<organism>
    <name type="scientific">Schizosaccharomyces pombe (strain 972 / ATCC 24843)</name>
    <name type="common">Fission yeast</name>
    <dbReference type="NCBI Taxonomy" id="284812"/>
    <lineage>
        <taxon>Eukaryota</taxon>
        <taxon>Fungi</taxon>
        <taxon>Dikarya</taxon>
        <taxon>Ascomycota</taxon>
        <taxon>Taphrinomycotina</taxon>
        <taxon>Schizosaccharomycetes</taxon>
        <taxon>Schizosaccharomycetales</taxon>
        <taxon>Schizosaccharomycetaceae</taxon>
        <taxon>Schizosaccharomyces</taxon>
    </lineage>
</organism>
<proteinExistence type="inferred from homology"/>
<gene>
    <name type="ORF">SPAC607.02c</name>
</gene>
<sequence length="231" mass="27355">MPTKTKKRSVLEAERKKIGLDHAPKEDESVDDNFPKQFKRLLQQKEYHESKKKEIKKGNLKNKKKKDYGKIQRLPGERLSEFSQRVNKAIPVSFKSGPSKIDEFTDKKEKKKIAKRKEKRERDWNEIEENFEDKTWEADTTGQFIQIESRKKRKNSPDPWANLQTKPSFGETVQAPPELPELKIKETKYLENVPKVNNMGQTESMARRQALGKQRLELIEKYRELMKTKRK</sequence>